<reference key="1">
    <citation type="journal article" date="2000" name="Nature">
        <title>Complete genome sequence of Pseudomonas aeruginosa PAO1, an opportunistic pathogen.</title>
        <authorList>
            <person name="Stover C.K."/>
            <person name="Pham X.-Q.T."/>
            <person name="Erwin A.L."/>
            <person name="Mizoguchi S.D."/>
            <person name="Warrener P."/>
            <person name="Hickey M.J."/>
            <person name="Brinkman F.S.L."/>
            <person name="Hufnagle W.O."/>
            <person name="Kowalik D.J."/>
            <person name="Lagrou M."/>
            <person name="Garber R.L."/>
            <person name="Goltry L."/>
            <person name="Tolentino E."/>
            <person name="Westbrock-Wadman S."/>
            <person name="Yuan Y."/>
            <person name="Brody L.L."/>
            <person name="Coulter S.N."/>
            <person name="Folger K.R."/>
            <person name="Kas A."/>
            <person name="Larbig K."/>
            <person name="Lim R.M."/>
            <person name="Smith K.A."/>
            <person name="Spencer D.H."/>
            <person name="Wong G.K.-S."/>
            <person name="Wu Z."/>
            <person name="Paulsen I.T."/>
            <person name="Reizer J."/>
            <person name="Saier M.H. Jr."/>
            <person name="Hancock R.E.W."/>
            <person name="Lory S."/>
            <person name="Olson M.V."/>
        </authorList>
    </citation>
    <scope>NUCLEOTIDE SEQUENCE [LARGE SCALE GENOMIC DNA]</scope>
    <source>
        <strain>ATCC 15692 / DSM 22644 / CIP 104116 / JCM 14847 / LMG 12228 / 1C / PRS 101 / PAO1</strain>
    </source>
</reference>
<proteinExistence type="inferred from homology"/>
<organism>
    <name type="scientific">Pseudomonas aeruginosa (strain ATCC 15692 / DSM 22644 / CIP 104116 / JCM 14847 / LMG 12228 / 1C / PRS 101 / PAO1)</name>
    <dbReference type="NCBI Taxonomy" id="208964"/>
    <lineage>
        <taxon>Bacteria</taxon>
        <taxon>Pseudomonadati</taxon>
        <taxon>Pseudomonadota</taxon>
        <taxon>Gammaproteobacteria</taxon>
        <taxon>Pseudomonadales</taxon>
        <taxon>Pseudomonadaceae</taxon>
        <taxon>Pseudomonas</taxon>
    </lineage>
</organism>
<sequence length="154" mass="17926">MHCPFCGAHDTKVIDSRLVAEGDQVRRRRECLACGERFTTFETAELVMPRLIKQDGSRQPFDEDKLRAGMQRALEKRPVSVERLEAAIGHIKHQLRATGEREIKSRVLGELVMAELQKLDEVAYIRFASVYRRFQDLNEFREEIERLAREPAKE</sequence>
<feature type="chain" id="PRO_0000182334" description="Transcriptional repressor NrdR">
    <location>
        <begin position="1"/>
        <end position="154"/>
    </location>
</feature>
<feature type="domain" description="ATP-cone" evidence="1">
    <location>
        <begin position="49"/>
        <end position="139"/>
    </location>
</feature>
<feature type="zinc finger region" evidence="1">
    <location>
        <begin position="3"/>
        <end position="34"/>
    </location>
</feature>
<gene>
    <name evidence="1" type="primary">nrdR</name>
    <name type="ordered locus">PA4057</name>
</gene>
<dbReference type="EMBL" id="AE004091">
    <property type="protein sequence ID" value="AAG07444.1"/>
    <property type="molecule type" value="Genomic_DNA"/>
</dbReference>
<dbReference type="PIR" id="A83138">
    <property type="entry name" value="A83138"/>
</dbReference>
<dbReference type="RefSeq" id="NP_252746.1">
    <property type="nucleotide sequence ID" value="NC_002516.2"/>
</dbReference>
<dbReference type="RefSeq" id="WP_003107181.1">
    <property type="nucleotide sequence ID" value="NZ_QZGE01000013.1"/>
</dbReference>
<dbReference type="SMR" id="Q9HWX1"/>
<dbReference type="FunCoup" id="Q9HWX1">
    <property type="interactions" value="342"/>
</dbReference>
<dbReference type="STRING" id="208964.PA4057"/>
<dbReference type="PaxDb" id="208964-PA4057"/>
<dbReference type="DNASU" id="879080"/>
<dbReference type="GeneID" id="77219392"/>
<dbReference type="GeneID" id="879080"/>
<dbReference type="KEGG" id="pae:PA4057"/>
<dbReference type="PATRIC" id="fig|208964.12.peg.4248"/>
<dbReference type="PseudoCAP" id="PA4057"/>
<dbReference type="HOGENOM" id="CLU_108412_0_0_6"/>
<dbReference type="InParanoid" id="Q9HWX1"/>
<dbReference type="OrthoDB" id="9807461at2"/>
<dbReference type="PhylomeDB" id="Q9HWX1"/>
<dbReference type="BioCyc" id="PAER208964:G1FZ6-4130-MONOMER"/>
<dbReference type="Proteomes" id="UP000002438">
    <property type="component" value="Chromosome"/>
</dbReference>
<dbReference type="GO" id="GO:0005524">
    <property type="term" value="F:ATP binding"/>
    <property type="evidence" value="ECO:0007669"/>
    <property type="project" value="UniProtKB-KW"/>
</dbReference>
<dbReference type="GO" id="GO:0003690">
    <property type="term" value="F:double-stranded DNA binding"/>
    <property type="evidence" value="ECO:0000318"/>
    <property type="project" value="GO_Central"/>
</dbReference>
<dbReference type="GO" id="GO:0008270">
    <property type="term" value="F:zinc ion binding"/>
    <property type="evidence" value="ECO:0007669"/>
    <property type="project" value="UniProtKB-UniRule"/>
</dbReference>
<dbReference type="GO" id="GO:0045892">
    <property type="term" value="P:negative regulation of DNA-templated transcription"/>
    <property type="evidence" value="ECO:0000318"/>
    <property type="project" value="GO_Central"/>
</dbReference>
<dbReference type="HAMAP" id="MF_00440">
    <property type="entry name" value="NrdR"/>
    <property type="match status" value="1"/>
</dbReference>
<dbReference type="InterPro" id="IPR005144">
    <property type="entry name" value="ATP-cone_dom"/>
</dbReference>
<dbReference type="InterPro" id="IPR055173">
    <property type="entry name" value="NrdR-like_N"/>
</dbReference>
<dbReference type="InterPro" id="IPR003796">
    <property type="entry name" value="RNR_NrdR-like"/>
</dbReference>
<dbReference type="NCBIfam" id="TIGR00244">
    <property type="entry name" value="transcriptional regulator NrdR"/>
    <property type="match status" value="1"/>
</dbReference>
<dbReference type="PANTHER" id="PTHR30455">
    <property type="entry name" value="TRANSCRIPTIONAL REPRESSOR NRDR"/>
    <property type="match status" value="1"/>
</dbReference>
<dbReference type="PANTHER" id="PTHR30455:SF2">
    <property type="entry name" value="TRANSCRIPTIONAL REPRESSOR NRDR"/>
    <property type="match status" value="1"/>
</dbReference>
<dbReference type="Pfam" id="PF03477">
    <property type="entry name" value="ATP-cone"/>
    <property type="match status" value="1"/>
</dbReference>
<dbReference type="Pfam" id="PF22811">
    <property type="entry name" value="Zn_ribbon_NrdR"/>
    <property type="match status" value="1"/>
</dbReference>
<dbReference type="PROSITE" id="PS51161">
    <property type="entry name" value="ATP_CONE"/>
    <property type="match status" value="1"/>
</dbReference>
<evidence type="ECO:0000255" key="1">
    <source>
        <dbReference type="HAMAP-Rule" id="MF_00440"/>
    </source>
</evidence>
<protein>
    <recommendedName>
        <fullName evidence="1">Transcriptional repressor NrdR</fullName>
    </recommendedName>
</protein>
<comment type="function">
    <text evidence="1">Negatively regulates transcription of bacterial ribonucleotide reductase nrd genes and operons by binding to NrdR-boxes.</text>
</comment>
<comment type="cofactor">
    <cofactor evidence="1">
        <name>Zn(2+)</name>
        <dbReference type="ChEBI" id="CHEBI:29105"/>
    </cofactor>
    <text evidence="1">Binds 1 zinc ion.</text>
</comment>
<comment type="similarity">
    <text evidence="1">Belongs to the NrdR family.</text>
</comment>
<accession>Q9HWX1</accession>
<name>NRDR_PSEAE</name>
<keyword id="KW-0067">ATP-binding</keyword>
<keyword id="KW-0238">DNA-binding</keyword>
<keyword id="KW-0479">Metal-binding</keyword>
<keyword id="KW-0547">Nucleotide-binding</keyword>
<keyword id="KW-1185">Reference proteome</keyword>
<keyword id="KW-0678">Repressor</keyword>
<keyword id="KW-0804">Transcription</keyword>
<keyword id="KW-0805">Transcription regulation</keyword>
<keyword id="KW-0862">Zinc</keyword>
<keyword id="KW-0863">Zinc-finger</keyword>